<gene>
    <name evidence="1" type="primary">apgM</name>
    <name type="ordered locus">STK_03770</name>
</gene>
<comment type="function">
    <text evidence="1">Catalyzes the interconversion of 2-phosphoglycerate and 3-phosphoglycerate.</text>
</comment>
<comment type="catalytic activity">
    <reaction evidence="1">
        <text>(2R)-2-phosphoglycerate = (2R)-3-phosphoglycerate</text>
        <dbReference type="Rhea" id="RHEA:15901"/>
        <dbReference type="ChEBI" id="CHEBI:58272"/>
        <dbReference type="ChEBI" id="CHEBI:58289"/>
        <dbReference type="EC" id="5.4.2.12"/>
    </reaction>
</comment>
<comment type="pathway">
    <text evidence="1">Carbohydrate degradation; glycolysis; pyruvate from D-glyceraldehyde 3-phosphate: step 3/5.</text>
</comment>
<comment type="similarity">
    <text evidence="1">Belongs to the BPG-independent phosphoglycerate mutase family. A-PGAM subfamily.</text>
</comment>
<reference key="1">
    <citation type="journal article" date="2001" name="DNA Res.">
        <title>Complete genome sequence of an aerobic thermoacidophilic Crenarchaeon, Sulfolobus tokodaii strain7.</title>
        <authorList>
            <person name="Kawarabayasi Y."/>
            <person name="Hino Y."/>
            <person name="Horikawa H."/>
            <person name="Jin-no K."/>
            <person name="Takahashi M."/>
            <person name="Sekine M."/>
            <person name="Baba S."/>
            <person name="Ankai A."/>
            <person name="Kosugi H."/>
            <person name="Hosoyama A."/>
            <person name="Fukui S."/>
            <person name="Nagai Y."/>
            <person name="Nishijima K."/>
            <person name="Otsuka R."/>
            <person name="Nakazawa H."/>
            <person name="Takamiya M."/>
            <person name="Kato Y."/>
            <person name="Yoshizawa T."/>
            <person name="Tanaka T."/>
            <person name="Kudoh Y."/>
            <person name="Yamazaki J."/>
            <person name="Kushida N."/>
            <person name="Oguchi A."/>
            <person name="Aoki K."/>
            <person name="Masuda S."/>
            <person name="Yanagii M."/>
            <person name="Nishimura M."/>
            <person name="Yamagishi A."/>
            <person name="Oshima T."/>
            <person name="Kikuchi H."/>
        </authorList>
    </citation>
    <scope>NUCLEOTIDE SEQUENCE [LARGE SCALE GENOMIC DNA]</scope>
    <source>
        <strain>DSM 16993 / JCM 10545 / NBRC 100140 / 7</strain>
    </source>
</reference>
<dbReference type="EC" id="5.4.2.12" evidence="1"/>
<dbReference type="EMBL" id="BA000023">
    <property type="protein sequence ID" value="BAB65357.1"/>
    <property type="molecule type" value="Genomic_DNA"/>
</dbReference>
<dbReference type="RefSeq" id="WP_010978340.1">
    <property type="nucleotide sequence ID" value="NC_003106.2"/>
</dbReference>
<dbReference type="SMR" id="Q975P3"/>
<dbReference type="STRING" id="273063.STK_03770"/>
<dbReference type="GeneID" id="1458301"/>
<dbReference type="KEGG" id="sto:STK_03770"/>
<dbReference type="PATRIC" id="fig|273063.9.peg.437"/>
<dbReference type="eggNOG" id="arCOG01696">
    <property type="taxonomic scope" value="Archaea"/>
</dbReference>
<dbReference type="OrthoDB" id="52918at2157"/>
<dbReference type="UniPathway" id="UPA00109">
    <property type="reaction ID" value="UER00186"/>
</dbReference>
<dbReference type="Proteomes" id="UP000001015">
    <property type="component" value="Chromosome"/>
</dbReference>
<dbReference type="GO" id="GO:0046872">
    <property type="term" value="F:metal ion binding"/>
    <property type="evidence" value="ECO:0007669"/>
    <property type="project" value="InterPro"/>
</dbReference>
<dbReference type="GO" id="GO:0004619">
    <property type="term" value="F:phosphoglycerate mutase activity"/>
    <property type="evidence" value="ECO:0007669"/>
    <property type="project" value="UniProtKB-EC"/>
</dbReference>
<dbReference type="GO" id="GO:0006096">
    <property type="term" value="P:glycolytic process"/>
    <property type="evidence" value="ECO:0007669"/>
    <property type="project" value="UniProtKB-UniRule"/>
</dbReference>
<dbReference type="CDD" id="cd16011">
    <property type="entry name" value="iPGM_like"/>
    <property type="match status" value="1"/>
</dbReference>
<dbReference type="Gene3D" id="3.40.720.10">
    <property type="entry name" value="Alkaline Phosphatase, subunit A"/>
    <property type="match status" value="2"/>
</dbReference>
<dbReference type="Gene3D" id="3.30.70.2130">
    <property type="entry name" value="Metalloenzyme domain"/>
    <property type="match status" value="1"/>
</dbReference>
<dbReference type="HAMAP" id="MF_01402_A">
    <property type="entry name" value="ApgM_A"/>
    <property type="match status" value="1"/>
</dbReference>
<dbReference type="InterPro" id="IPR017850">
    <property type="entry name" value="Alkaline_phosphatase_core_sf"/>
</dbReference>
<dbReference type="InterPro" id="IPR023665">
    <property type="entry name" value="ApgAM_prokaryotes"/>
</dbReference>
<dbReference type="InterPro" id="IPR006124">
    <property type="entry name" value="Metalloenzyme"/>
</dbReference>
<dbReference type="InterPro" id="IPR004456">
    <property type="entry name" value="Pglycerate_mutase_ApgM"/>
</dbReference>
<dbReference type="InterPro" id="IPR042253">
    <property type="entry name" value="Pglycerate_mutase_ApgM_sf"/>
</dbReference>
<dbReference type="NCBIfam" id="TIGR00306">
    <property type="entry name" value="apgM"/>
    <property type="match status" value="1"/>
</dbReference>
<dbReference type="NCBIfam" id="NF003104">
    <property type="entry name" value="PRK04024.1"/>
    <property type="match status" value="1"/>
</dbReference>
<dbReference type="PANTHER" id="PTHR31209">
    <property type="entry name" value="COFACTOR-INDEPENDENT PHOSPHOGLYCERATE MUTASE"/>
    <property type="match status" value="1"/>
</dbReference>
<dbReference type="PANTHER" id="PTHR31209:SF0">
    <property type="entry name" value="METALLOENZYME DOMAIN-CONTAINING PROTEIN"/>
    <property type="match status" value="1"/>
</dbReference>
<dbReference type="Pfam" id="PF01676">
    <property type="entry name" value="Metalloenzyme"/>
    <property type="match status" value="1"/>
</dbReference>
<dbReference type="Pfam" id="PF10143">
    <property type="entry name" value="PhosphMutase"/>
    <property type="match status" value="1"/>
</dbReference>
<dbReference type="PIRSF" id="PIRSF006392">
    <property type="entry name" value="IPGAM_arch"/>
    <property type="match status" value="1"/>
</dbReference>
<dbReference type="SUPFAM" id="SSF53649">
    <property type="entry name" value="Alkaline phosphatase-like"/>
    <property type="match status" value="1"/>
</dbReference>
<evidence type="ECO:0000255" key="1">
    <source>
        <dbReference type="HAMAP-Rule" id="MF_01402"/>
    </source>
</evidence>
<sequence>MKQYKILFFIADGLGDRPVRKLQGKTPLEYVDKPNIRELLKNSIIGLMDPISPGVVAGSDTSHLSMFGLDPHKYYRGRGAFEAIGAGARLKASDVAFRGNFATVNNEFIVVDRRAGRKIEEADDLVKELNEKIGEIDGVKVRFYHGTEHRVAVVLSGKGLTDKVSDTDPHEVNKKVLESKPLDNSPESQFTANIINKLTRKIYEILNSSEINKIRVSKGELPANIILLRGAAEFVELPQFESYTKLKAAAVSATALIKGICEQIGMRVVTPPGATGGLDTNYLGKADAAVELLKEYDFVFLHLKATDAASHDGNVDGKVYAINKMDEMIGRILDKLGSELVIAISGDHTTPVEVKEHTGDPVPFLLYVPYDIINDVVNDFNEREARRGSLRIRGLDVINLLLNYSNRAEKYGA</sequence>
<feature type="chain" id="PRO_0000138149" description="2,3-bisphosphoglycerate-independent phosphoglycerate mutase">
    <location>
        <begin position="1"/>
        <end position="413"/>
    </location>
</feature>
<keyword id="KW-0324">Glycolysis</keyword>
<keyword id="KW-0413">Isomerase</keyword>
<keyword id="KW-1185">Reference proteome</keyword>
<name>APGM_SULTO</name>
<protein>
    <recommendedName>
        <fullName evidence="1">2,3-bisphosphoglycerate-independent phosphoglycerate mutase</fullName>
        <shortName evidence="1">BPG-independent PGAM</shortName>
        <shortName evidence="1">Phosphoglyceromutase</shortName>
        <shortName evidence="1">aPGAM</shortName>
        <ecNumber evidence="1">5.4.2.12</ecNumber>
    </recommendedName>
</protein>
<proteinExistence type="inferred from homology"/>
<organism>
    <name type="scientific">Sulfurisphaera tokodaii (strain DSM 16993 / JCM 10545 / NBRC 100140 / 7)</name>
    <name type="common">Sulfolobus tokodaii</name>
    <dbReference type="NCBI Taxonomy" id="273063"/>
    <lineage>
        <taxon>Archaea</taxon>
        <taxon>Thermoproteota</taxon>
        <taxon>Thermoprotei</taxon>
        <taxon>Sulfolobales</taxon>
        <taxon>Sulfolobaceae</taxon>
        <taxon>Sulfurisphaera</taxon>
    </lineage>
</organism>
<accession>Q975P3</accession>